<name>ZIP4L_ORYSJ</name>
<feature type="chain" id="PRO_0000432120" description="TPR repeat-containing protein ZIP4">
    <location>
        <begin position="1"/>
        <end position="953"/>
    </location>
</feature>
<feature type="repeat" description="TPR 1" evidence="1">
    <location>
        <begin position="129"/>
        <end position="162"/>
    </location>
</feature>
<feature type="repeat" description="TPR 2" evidence="1">
    <location>
        <begin position="432"/>
        <end position="465"/>
    </location>
</feature>
<feature type="repeat" description="TPR 3" evidence="1">
    <location>
        <begin position="473"/>
        <end position="506"/>
    </location>
</feature>
<feature type="region of interest" description="Disordered" evidence="2">
    <location>
        <begin position="248"/>
        <end position="269"/>
    </location>
</feature>
<feature type="region of interest" description="Disordered" evidence="2">
    <location>
        <begin position="925"/>
        <end position="953"/>
    </location>
</feature>
<feature type="compositionally biased region" description="Polar residues" evidence="2">
    <location>
        <begin position="943"/>
        <end position="953"/>
    </location>
</feature>
<keyword id="KW-0158">Chromosome</keyword>
<keyword id="KW-0233">DNA recombination</keyword>
<keyword id="KW-0469">Meiosis</keyword>
<keyword id="KW-0539">Nucleus</keyword>
<keyword id="KW-1185">Reference proteome</keyword>
<keyword id="KW-0677">Repeat</keyword>
<keyword id="KW-0802">TPR repeat</keyword>
<reference key="1">
    <citation type="journal article" date="2002" name="Nature">
        <title>The genome sequence and structure of rice chromosome 1.</title>
        <authorList>
            <person name="Sasaki T."/>
            <person name="Matsumoto T."/>
            <person name="Yamamoto K."/>
            <person name="Sakata K."/>
            <person name="Baba T."/>
            <person name="Katayose Y."/>
            <person name="Wu J."/>
            <person name="Niimura Y."/>
            <person name="Cheng Z."/>
            <person name="Nagamura Y."/>
            <person name="Antonio B.A."/>
            <person name="Kanamori H."/>
            <person name="Hosokawa S."/>
            <person name="Masukawa M."/>
            <person name="Arikawa K."/>
            <person name="Chiden Y."/>
            <person name="Hayashi M."/>
            <person name="Okamoto M."/>
            <person name="Ando T."/>
            <person name="Aoki H."/>
            <person name="Arita K."/>
            <person name="Hamada M."/>
            <person name="Harada C."/>
            <person name="Hijishita S."/>
            <person name="Honda M."/>
            <person name="Ichikawa Y."/>
            <person name="Idonuma A."/>
            <person name="Iijima M."/>
            <person name="Ikeda M."/>
            <person name="Ikeno M."/>
            <person name="Ito S."/>
            <person name="Ito T."/>
            <person name="Ito Y."/>
            <person name="Ito Y."/>
            <person name="Iwabuchi A."/>
            <person name="Kamiya K."/>
            <person name="Karasawa W."/>
            <person name="Katagiri S."/>
            <person name="Kikuta A."/>
            <person name="Kobayashi N."/>
            <person name="Kono I."/>
            <person name="Machita K."/>
            <person name="Maehara T."/>
            <person name="Mizuno H."/>
            <person name="Mizubayashi T."/>
            <person name="Mukai Y."/>
            <person name="Nagasaki H."/>
            <person name="Nakashima M."/>
            <person name="Nakama Y."/>
            <person name="Nakamichi Y."/>
            <person name="Nakamura M."/>
            <person name="Namiki N."/>
            <person name="Negishi M."/>
            <person name="Ohta I."/>
            <person name="Ono N."/>
            <person name="Saji S."/>
            <person name="Sakai K."/>
            <person name="Shibata M."/>
            <person name="Shimokawa T."/>
            <person name="Shomura A."/>
            <person name="Song J."/>
            <person name="Takazaki Y."/>
            <person name="Terasawa K."/>
            <person name="Tsuji K."/>
            <person name="Waki K."/>
            <person name="Yamagata H."/>
            <person name="Yamane H."/>
            <person name="Yoshiki S."/>
            <person name="Yoshihara R."/>
            <person name="Yukawa K."/>
            <person name="Zhong H."/>
            <person name="Iwama H."/>
            <person name="Endo T."/>
            <person name="Ito H."/>
            <person name="Hahn J.H."/>
            <person name="Kim H.-I."/>
            <person name="Eun M.-Y."/>
            <person name="Yano M."/>
            <person name="Jiang J."/>
            <person name="Gojobori T."/>
        </authorList>
    </citation>
    <scope>NUCLEOTIDE SEQUENCE [LARGE SCALE GENOMIC DNA]</scope>
    <source>
        <strain>cv. Nipponbare</strain>
    </source>
</reference>
<reference key="2">
    <citation type="journal article" date="2005" name="Nature">
        <title>The map-based sequence of the rice genome.</title>
        <authorList>
            <consortium name="International rice genome sequencing project (IRGSP)"/>
        </authorList>
    </citation>
    <scope>NUCLEOTIDE SEQUENCE [LARGE SCALE GENOMIC DNA]</scope>
    <source>
        <strain>cv. Nipponbare</strain>
    </source>
</reference>
<reference key="3">
    <citation type="journal article" date="2008" name="Nucleic Acids Res.">
        <title>The rice annotation project database (RAP-DB): 2008 update.</title>
        <authorList>
            <consortium name="The rice annotation project (RAP)"/>
        </authorList>
    </citation>
    <scope>GENOME REANNOTATION</scope>
    <source>
        <strain>cv. Nipponbare</strain>
    </source>
</reference>
<reference key="4">
    <citation type="journal article" date="2013" name="Rice">
        <title>Improvement of the Oryza sativa Nipponbare reference genome using next generation sequence and optical map data.</title>
        <authorList>
            <person name="Kawahara Y."/>
            <person name="de la Bastide M."/>
            <person name="Hamilton J.P."/>
            <person name="Kanamori H."/>
            <person name="McCombie W.R."/>
            <person name="Ouyang S."/>
            <person name="Schwartz D.C."/>
            <person name="Tanaka T."/>
            <person name="Wu J."/>
            <person name="Zhou S."/>
            <person name="Childs K.L."/>
            <person name="Davidson R.M."/>
            <person name="Lin H."/>
            <person name="Quesada-Ocampo L."/>
            <person name="Vaillancourt B."/>
            <person name="Sakai H."/>
            <person name="Lee S.S."/>
            <person name="Kim J."/>
            <person name="Numa H."/>
            <person name="Itoh T."/>
            <person name="Buell C.R."/>
            <person name="Matsumoto T."/>
        </authorList>
    </citation>
    <scope>GENOME REANNOTATION</scope>
    <source>
        <strain>cv. Nipponbare</strain>
    </source>
</reference>
<reference key="5">
    <citation type="journal article" date="2005" name="PLoS Biol.">
        <title>The genomes of Oryza sativa: a history of duplications.</title>
        <authorList>
            <person name="Yu J."/>
            <person name="Wang J."/>
            <person name="Lin W."/>
            <person name="Li S."/>
            <person name="Li H."/>
            <person name="Zhou J."/>
            <person name="Ni P."/>
            <person name="Dong W."/>
            <person name="Hu S."/>
            <person name="Zeng C."/>
            <person name="Zhang J."/>
            <person name="Zhang Y."/>
            <person name="Li R."/>
            <person name="Xu Z."/>
            <person name="Li S."/>
            <person name="Li X."/>
            <person name="Zheng H."/>
            <person name="Cong L."/>
            <person name="Lin L."/>
            <person name="Yin J."/>
            <person name="Geng J."/>
            <person name="Li G."/>
            <person name="Shi J."/>
            <person name="Liu J."/>
            <person name="Lv H."/>
            <person name="Li J."/>
            <person name="Wang J."/>
            <person name="Deng Y."/>
            <person name="Ran L."/>
            <person name="Shi X."/>
            <person name="Wang X."/>
            <person name="Wu Q."/>
            <person name="Li C."/>
            <person name="Ren X."/>
            <person name="Wang J."/>
            <person name="Wang X."/>
            <person name="Li D."/>
            <person name="Liu D."/>
            <person name="Zhang X."/>
            <person name="Ji Z."/>
            <person name="Zhao W."/>
            <person name="Sun Y."/>
            <person name="Zhang Z."/>
            <person name="Bao J."/>
            <person name="Han Y."/>
            <person name="Dong L."/>
            <person name="Ji J."/>
            <person name="Chen P."/>
            <person name="Wu S."/>
            <person name="Liu J."/>
            <person name="Xiao Y."/>
            <person name="Bu D."/>
            <person name="Tan J."/>
            <person name="Yang L."/>
            <person name="Ye C."/>
            <person name="Zhang J."/>
            <person name="Xu J."/>
            <person name="Zhou Y."/>
            <person name="Yu Y."/>
            <person name="Zhang B."/>
            <person name="Zhuang S."/>
            <person name="Wei H."/>
            <person name="Liu B."/>
            <person name="Lei M."/>
            <person name="Yu H."/>
            <person name="Li Y."/>
            <person name="Xu H."/>
            <person name="Wei S."/>
            <person name="He X."/>
            <person name="Fang L."/>
            <person name="Zhang Z."/>
            <person name="Zhang Y."/>
            <person name="Huang X."/>
            <person name="Su Z."/>
            <person name="Tong W."/>
            <person name="Li J."/>
            <person name="Tong Z."/>
            <person name="Li S."/>
            <person name="Ye J."/>
            <person name="Wang L."/>
            <person name="Fang L."/>
            <person name="Lei T."/>
            <person name="Chen C.-S."/>
            <person name="Chen H.-C."/>
            <person name="Xu Z."/>
            <person name="Li H."/>
            <person name="Huang H."/>
            <person name="Zhang F."/>
            <person name="Xu H."/>
            <person name="Li N."/>
            <person name="Zhao C."/>
            <person name="Li S."/>
            <person name="Dong L."/>
            <person name="Huang Y."/>
            <person name="Li L."/>
            <person name="Xi Y."/>
            <person name="Qi Q."/>
            <person name="Li W."/>
            <person name="Zhang B."/>
            <person name="Hu W."/>
            <person name="Zhang Y."/>
            <person name="Tian X."/>
            <person name="Jiao Y."/>
            <person name="Liang X."/>
            <person name="Jin J."/>
            <person name="Gao L."/>
            <person name="Zheng W."/>
            <person name="Hao B."/>
            <person name="Liu S.-M."/>
            <person name="Wang W."/>
            <person name="Yuan L."/>
            <person name="Cao M."/>
            <person name="McDermott J."/>
            <person name="Samudrala R."/>
            <person name="Wang J."/>
            <person name="Wong G.K.-S."/>
            <person name="Yang H."/>
        </authorList>
    </citation>
    <scope>NUCLEOTIDE SEQUENCE [LARGE SCALE GENOMIC DNA]</scope>
    <source>
        <strain>cv. Nipponbare</strain>
    </source>
</reference>
<reference key="6">
    <citation type="journal article" date="2012" name="J. Cell Sci.">
        <title>ZIP4 in homologous chromosome synapsis and crossover formation in rice meiosis.</title>
        <authorList>
            <person name="Shen Y."/>
            <person name="Tang D."/>
            <person name="Wang K."/>
            <person name="Wang M."/>
            <person name="Huang J."/>
            <person name="Luo W."/>
            <person name="Luo Q."/>
            <person name="Hong L."/>
            <person name="Li M."/>
            <person name="Cheng Z."/>
        </authorList>
    </citation>
    <scope>FUNCTION</scope>
    <scope>SUBCELLULAR LOCATION</scope>
    <scope>DISRUPTION PHENOTYPE</scope>
</reference>
<reference key="7">
    <citation type="journal article" date="2019" name="Plant Physiol.">
        <title>A multiprotein complex regulates interference-sensitive crossover formation in rice.</title>
        <authorList>
            <person name="Zhang J."/>
            <person name="Wang C."/>
            <person name="Higgins J.D."/>
            <person name="Kim Y.J."/>
            <person name="Moon S."/>
            <person name="Jung K.H."/>
            <person name="Qu S."/>
            <person name="Liang W."/>
        </authorList>
    </citation>
    <scope>INTERACTION WITH HEI10 AND SHOC1</scope>
</reference>
<organism>
    <name type="scientific">Oryza sativa subsp. japonica</name>
    <name type="common">Rice</name>
    <dbReference type="NCBI Taxonomy" id="39947"/>
    <lineage>
        <taxon>Eukaryota</taxon>
        <taxon>Viridiplantae</taxon>
        <taxon>Streptophyta</taxon>
        <taxon>Embryophyta</taxon>
        <taxon>Tracheophyta</taxon>
        <taxon>Spermatophyta</taxon>
        <taxon>Magnoliopsida</taxon>
        <taxon>Liliopsida</taxon>
        <taxon>Poales</taxon>
        <taxon>Poaceae</taxon>
        <taxon>BOP clade</taxon>
        <taxon>Oryzoideae</taxon>
        <taxon>Oryzeae</taxon>
        <taxon>Oryzinae</taxon>
        <taxon>Oryza</taxon>
        <taxon>Oryza sativa</taxon>
    </lineage>
</organism>
<accession>Q5N829</accession>
<accession>A0A0N7KE78</accession>
<accession>C7IXP2</accession>
<accession>Q0JH13</accession>
<protein>
    <recommendedName>
        <fullName evidence="7">TPR repeat-containing protein ZIP4</fullName>
    </recommendedName>
    <alternativeName>
        <fullName evidence="7">Protein ZIP4 homolog</fullName>
        <shortName evidence="6">OsZIP4</shortName>
    </alternativeName>
</protein>
<evidence type="ECO:0000255" key="1"/>
<evidence type="ECO:0000256" key="2">
    <source>
        <dbReference type="SAM" id="MobiDB-lite"/>
    </source>
</evidence>
<evidence type="ECO:0000269" key="3">
    <source>
    </source>
</evidence>
<evidence type="ECO:0000269" key="4">
    <source>
    </source>
</evidence>
<evidence type="ECO:0000303" key="5">
    <source>
    </source>
</evidence>
<evidence type="ECO:0000303" key="6">
    <source>
    </source>
</evidence>
<evidence type="ECO:0000305" key="7"/>
<evidence type="ECO:0000312" key="8">
    <source>
        <dbReference type="EMBL" id="BAD82387.1"/>
    </source>
</evidence>
<evidence type="ECO:0000312" key="9">
    <source>
        <dbReference type="EMBL" id="BAD87533.1"/>
    </source>
</evidence>
<evidence type="ECO:0000312" key="10">
    <source>
        <dbReference type="EMBL" id="BAH91418.1"/>
    </source>
</evidence>
<evidence type="ECO:0000312" key="11">
    <source>
        <dbReference type="EMBL" id="EAZ14445.1"/>
    </source>
</evidence>
<comment type="function">
    <text evidence="3">Required for crossover formation, complete synapsis of homologous chromosomes and bivalent formation during meiosis. Is specific to recombination events resulting in interference-sensitive crossovers (class I meiotic crossover) and works cooperatively with MER3 to promote crossovers.</text>
</comment>
<comment type="subunit">
    <text evidence="4">Interacts with HEI10 and SHOC1.</text>
</comment>
<comment type="subcellular location">
    <subcellularLocation>
        <location evidence="3">Nucleus</location>
    </subcellularLocation>
    <subcellularLocation>
        <location evidence="3">Chromosome</location>
    </subcellularLocation>
    <text evidence="3">Detected in punctuate foci onto the chromosomes in prophase I meiocytes.</text>
</comment>
<comment type="disruption phenotype">
    <text evidence="3">Complete loss of fertility due to defect in meiosis.</text>
</comment>
<comment type="sequence caution" evidence="7">
    <conflict type="erroneous initiation">
        <sequence resource="EMBL-CDS" id="BAF06965"/>
    </conflict>
    <text>Extended N-terminus.</text>
</comment>
<comment type="sequence caution" evidence="7">
    <conflict type="erroneous gene model prediction">
        <sequence resource="EMBL-CDS" id="BAH91418"/>
    </conflict>
</comment>
<comment type="sequence caution" evidence="7">
    <conflict type="erroneous initiation">
        <sequence resource="EMBL-CDS" id="BAS75657"/>
    </conflict>
    <text>Extended N-terminus.</text>
</comment>
<gene>
    <name evidence="5" type="primary">ZIP4</name>
    <name evidence="10" type="ordered locus">Os01g0890900</name>
    <name evidence="7" type="ordered locus">LOC_Os01g66690</name>
    <name evidence="9" type="ORF">B1078G07.1</name>
    <name evidence="8" type="ORF">B1099D03.58</name>
    <name evidence="11" type="ORF">OsJ_04366</name>
</gene>
<proteinExistence type="evidence at protein level"/>
<dbReference type="EMBL" id="AP003407">
    <property type="protein sequence ID" value="BAD87533.1"/>
    <property type="molecule type" value="Genomic_DNA"/>
</dbReference>
<dbReference type="EMBL" id="AP003431">
    <property type="protein sequence ID" value="BAD82387.1"/>
    <property type="molecule type" value="Genomic_DNA"/>
</dbReference>
<dbReference type="EMBL" id="AP008207">
    <property type="protein sequence ID" value="BAF06965.1"/>
    <property type="status" value="ALT_INIT"/>
    <property type="molecule type" value="Genomic_DNA"/>
</dbReference>
<dbReference type="EMBL" id="AP008207">
    <property type="protein sequence ID" value="BAH91418.1"/>
    <property type="status" value="ALT_SEQ"/>
    <property type="molecule type" value="Genomic_DNA"/>
</dbReference>
<dbReference type="EMBL" id="AP014957">
    <property type="protein sequence ID" value="BAS75657.1"/>
    <property type="status" value="ALT_INIT"/>
    <property type="molecule type" value="Genomic_DNA"/>
</dbReference>
<dbReference type="EMBL" id="CM000138">
    <property type="protein sequence ID" value="EAZ14445.1"/>
    <property type="molecule type" value="Genomic_DNA"/>
</dbReference>
<dbReference type="RefSeq" id="XP_015621103.1">
    <property type="nucleotide sequence ID" value="XM_015765617.1"/>
</dbReference>
<dbReference type="SMR" id="Q5N829"/>
<dbReference type="FunCoup" id="Q5N829">
    <property type="interactions" value="23"/>
</dbReference>
<dbReference type="STRING" id="39947.Q5N829"/>
<dbReference type="PaxDb" id="39947-Q5N829"/>
<dbReference type="EnsemblPlants" id="Os01t0890900-01">
    <property type="protein sequence ID" value="Os01t0890900-01"/>
    <property type="gene ID" value="Os01g0890900"/>
</dbReference>
<dbReference type="GeneID" id="4324913"/>
<dbReference type="Gramene" id="Os01t0890900-01">
    <property type="protein sequence ID" value="Os01t0890900-01"/>
    <property type="gene ID" value="Os01g0890900"/>
</dbReference>
<dbReference type="KEGG" id="dosa:Os01g0890800"/>
<dbReference type="KEGG" id="dosa:Os01g0890900"/>
<dbReference type="KEGG" id="osa:4324913"/>
<dbReference type="eggNOG" id="KOG4814">
    <property type="taxonomic scope" value="Eukaryota"/>
</dbReference>
<dbReference type="HOGENOM" id="CLU_307264_0_0_1"/>
<dbReference type="InParanoid" id="Q5N829"/>
<dbReference type="OrthoDB" id="65716at2759"/>
<dbReference type="Proteomes" id="UP000000763">
    <property type="component" value="Chromosome 1"/>
</dbReference>
<dbReference type="Proteomes" id="UP000007752">
    <property type="component" value="Chromosome 1"/>
</dbReference>
<dbReference type="Proteomes" id="UP000059680">
    <property type="component" value="Chromosome 1"/>
</dbReference>
<dbReference type="GO" id="GO:0005694">
    <property type="term" value="C:chromosome"/>
    <property type="evidence" value="ECO:0000314"/>
    <property type="project" value="UniProtKB"/>
</dbReference>
<dbReference type="GO" id="GO:0005634">
    <property type="term" value="C:nucleus"/>
    <property type="evidence" value="ECO:0000314"/>
    <property type="project" value="UniProtKB"/>
</dbReference>
<dbReference type="GO" id="GO:0007143">
    <property type="term" value="P:female meiotic nuclear division"/>
    <property type="evidence" value="ECO:0007669"/>
    <property type="project" value="EnsemblPlants"/>
</dbReference>
<dbReference type="GO" id="GO:0007129">
    <property type="term" value="P:homologous chromosome pairing at meiosis"/>
    <property type="evidence" value="ECO:0000315"/>
    <property type="project" value="UniProtKB"/>
</dbReference>
<dbReference type="GO" id="GO:0007140">
    <property type="term" value="P:male meiotic nuclear division"/>
    <property type="evidence" value="ECO:0007669"/>
    <property type="project" value="EnsemblPlants"/>
</dbReference>
<dbReference type="GO" id="GO:0007131">
    <property type="term" value="P:reciprocal meiotic recombination"/>
    <property type="evidence" value="ECO:0000315"/>
    <property type="project" value="UniProtKB"/>
</dbReference>
<dbReference type="GO" id="GO:0090173">
    <property type="term" value="P:regulation of synaptonemal complex assembly"/>
    <property type="evidence" value="ECO:0007669"/>
    <property type="project" value="InterPro"/>
</dbReference>
<dbReference type="GO" id="GO:0071139">
    <property type="term" value="P:resolution of DNA recombination intermediates"/>
    <property type="evidence" value="ECO:0000315"/>
    <property type="project" value="UniProtKB"/>
</dbReference>
<dbReference type="GO" id="GO:0000712">
    <property type="term" value="P:resolution of meiotic recombination intermediates"/>
    <property type="evidence" value="ECO:0007669"/>
    <property type="project" value="EnsemblPlants"/>
</dbReference>
<dbReference type="FunFam" id="1.25.40.10:FF:001380">
    <property type="entry name" value="TPR repeat-containing protein ZIP4"/>
    <property type="match status" value="1"/>
</dbReference>
<dbReference type="FunFam" id="1.25.40.10:FF:002262">
    <property type="entry name" value="TPR repeat-containing protein ZIP4"/>
    <property type="match status" value="1"/>
</dbReference>
<dbReference type="Gene3D" id="1.25.40.10">
    <property type="entry name" value="Tetratricopeptide repeat domain"/>
    <property type="match status" value="2"/>
</dbReference>
<dbReference type="InterPro" id="IPR039057">
    <property type="entry name" value="Spo22/ZIP4"/>
</dbReference>
<dbReference type="InterPro" id="IPR013940">
    <property type="entry name" value="Spo22/ZIP4/TEX11"/>
</dbReference>
<dbReference type="InterPro" id="IPR011990">
    <property type="entry name" value="TPR-like_helical_dom_sf"/>
</dbReference>
<dbReference type="PANTHER" id="PTHR40375">
    <property type="entry name" value="SPORULATION-SPECIFIC PROTEIN 22"/>
    <property type="match status" value="1"/>
</dbReference>
<dbReference type="PANTHER" id="PTHR40375:SF2">
    <property type="entry name" value="SPORULATION-SPECIFIC PROTEIN 22"/>
    <property type="match status" value="1"/>
</dbReference>
<dbReference type="Pfam" id="PF08631">
    <property type="entry name" value="SPO22"/>
    <property type="match status" value="1"/>
</dbReference>
<dbReference type="SUPFAM" id="SSF48452">
    <property type="entry name" value="TPR-like"/>
    <property type="match status" value="1"/>
</dbReference>
<sequence length="953" mass="102607">MKISELSPEYREPPSHAGLIADLSKAVSDVESFAASATAPEKLAADLRRILTSLASAASSSSFTESLSVQIWRLGTRLWNAVVDRANSAALAGGPAALAVEAEIRQAAPELLLLAGIPNGVPSAAAKVASFFHRSGLAWLDLGRVDLASACFEKATPLVSAAATEDRGVLLELNLARARAASDAGDQALAVALLSRSKPLAAASPEGAKSLAQGYLSIGEATLAAKHSNPAVEASTLFTEALDLCEKAASPSSSSPRTPPYGGATPKTPNLEGLKRRCLRFLALERLQAQDYEGVLRCIRVSRASMGLEEEHPSIGVMAMRAWIGSGNMAEADKELERLMANALATENLCVSAAEAYLAAAGPEAARKVLIALAARCRAGGAAAAVRVVKQVIDGGGGGIGRARAIAELVSDERVVALFDGPGNTHERGTMHALLWNCGTEHFRAKNYDTSADLIERSMLYVSRDEESRSRRADCFRVLSICHIALQHLDRALEFVNEAYKVEPNIKCAFLKVKINLQKGEEDEAFKQMKTMVGCVDFNPEFLTLTAHEAMSCKSFGVAVASLSYLLGLYSAERPMPMPEVAVLRNLIELLSREPGTEAEILKYSRRAKQRMADLGVESFFGSGIVGGRELNWFADLSWNMGLRASKEKKYNFGAEFFELAAEFFSSRNAECDENRSKVCKALIMAVTIMLNAEELNNSPLSDSDIKKGVEMLSRAGKLLPLISPSVPVASDQLEANNFLYLHTFNSYQLMGRMGTPAHPQQLQLIKNFASSKACTPANLLTLGVTASKGALPNMLAAEFSLKACITTALASQSPNYRVISCALRKLACLAGLQDLNGSKSDAAYDVFQQAYQIVVGLKEGEYPVEEGQWLVATAWNMSCLPLRLHQAKVARKWMKMGLDLARHLEGMKERIASMQTTFENFERVSGDEPDECSQEEAPKASISGSMSQPVLV</sequence>